<accession>Q9LXX6</accession>
<comment type="function">
    <text>Component of the exocyst complex involved in the docking of exocytic vesicles with fusion sites on the plasma membrane during regulated or polarized secretion. Involved in polarized cell growth and organ morphogenesis. During cytokinesis, involved in cell plate initiation, cell plate maturation and formation of new primary cell wall.</text>
</comment>
<comment type="subunit">
    <text>The exocyst complex is composed of SEC3, SEC5, SEC6, SEC8, SEC10, EXO70A1 and EXO84B.</text>
</comment>
<comment type="subcellular location">
    <subcellularLocation>
        <location evidence="3">Cytoplasm</location>
        <location evidence="3">Cytosol</location>
    </subcellularLocation>
    <text>Localized to globular structures in the perinuclear region.</text>
</comment>
<comment type="disruption phenotype">
    <text evidence="2">Male gametophytic lethal due to defect in pollen germination and pollen tube growth.</text>
</comment>
<comment type="similarity">
    <text evidence="4">Belongs to the SEC15 family.</text>
</comment>
<comment type="sequence caution" evidence="4">
    <conflict type="erroneous initiation">
        <sequence resource="EMBL-CDS" id="CAB88067"/>
    </conflict>
    <text>Truncated N-terminus.</text>
</comment>
<proteinExistence type="inferred from homology"/>
<dbReference type="EMBL" id="AL163972">
    <property type="protein sequence ID" value="CAB88067.1"/>
    <property type="status" value="ALT_INIT"/>
    <property type="molecule type" value="Genomic_DNA"/>
</dbReference>
<dbReference type="EMBL" id="CP002686">
    <property type="protein sequence ID" value="AEE79547.1"/>
    <property type="molecule type" value="Genomic_DNA"/>
</dbReference>
<dbReference type="PIR" id="T49065">
    <property type="entry name" value="T49065"/>
</dbReference>
<dbReference type="RefSeq" id="NP_191223.2">
    <property type="nucleotide sequence ID" value="NM_115523.3"/>
</dbReference>
<dbReference type="SMR" id="Q9LXX6"/>
<dbReference type="FunCoup" id="Q9LXX6">
    <property type="interactions" value="3928"/>
</dbReference>
<dbReference type="STRING" id="3702.Q9LXX6"/>
<dbReference type="TCDB" id="1.F.2.1.3">
    <property type="family name" value="the octameric exocyst (exocyst) family"/>
</dbReference>
<dbReference type="PaxDb" id="3702-AT3G56640.1"/>
<dbReference type="ProteomicsDB" id="232960"/>
<dbReference type="EnsemblPlants" id="AT3G56640.1">
    <property type="protein sequence ID" value="AT3G56640.1"/>
    <property type="gene ID" value="AT3G56640"/>
</dbReference>
<dbReference type="GeneID" id="824831"/>
<dbReference type="Gramene" id="AT3G56640.1">
    <property type="protein sequence ID" value="AT3G56640.1"/>
    <property type="gene ID" value="AT3G56640"/>
</dbReference>
<dbReference type="KEGG" id="ath:AT3G56640"/>
<dbReference type="Araport" id="AT3G56640"/>
<dbReference type="TAIR" id="AT3G56640">
    <property type="gene designation" value="SEC15A"/>
</dbReference>
<dbReference type="eggNOG" id="KOG2176">
    <property type="taxonomic scope" value="Eukaryota"/>
</dbReference>
<dbReference type="HOGENOM" id="CLU_019671_0_0_1"/>
<dbReference type="InParanoid" id="Q9LXX6"/>
<dbReference type="OMA" id="NAVMGIN"/>
<dbReference type="PRO" id="PR:Q9LXX6"/>
<dbReference type="Proteomes" id="UP000006548">
    <property type="component" value="Chromosome 3"/>
</dbReference>
<dbReference type="ExpressionAtlas" id="Q9LXX6">
    <property type="expression patterns" value="baseline and differential"/>
</dbReference>
<dbReference type="GO" id="GO:0005829">
    <property type="term" value="C:cytosol"/>
    <property type="evidence" value="ECO:0000314"/>
    <property type="project" value="TAIR"/>
</dbReference>
<dbReference type="GO" id="GO:0000145">
    <property type="term" value="C:exocyst"/>
    <property type="evidence" value="ECO:0000314"/>
    <property type="project" value="TAIR"/>
</dbReference>
<dbReference type="GO" id="GO:0060321">
    <property type="term" value="P:acceptance of pollen"/>
    <property type="evidence" value="ECO:0000316"/>
    <property type="project" value="TAIR"/>
</dbReference>
<dbReference type="GO" id="GO:0006886">
    <property type="term" value="P:intracellular protein transport"/>
    <property type="evidence" value="ECO:0007669"/>
    <property type="project" value="InterPro"/>
</dbReference>
<dbReference type="GO" id="GO:0009846">
    <property type="term" value="P:pollen germination"/>
    <property type="evidence" value="ECO:0000315"/>
    <property type="project" value="TAIR"/>
</dbReference>
<dbReference type="GO" id="GO:0009860">
    <property type="term" value="P:pollen tube growth"/>
    <property type="evidence" value="ECO:0000315"/>
    <property type="project" value="TAIR"/>
</dbReference>
<dbReference type="GO" id="GO:0090522">
    <property type="term" value="P:vesicle tethering involved in exocytosis"/>
    <property type="evidence" value="ECO:0007669"/>
    <property type="project" value="InterPro"/>
</dbReference>
<dbReference type="FunFam" id="1.10.357.30:FF:000002">
    <property type="entry name" value="Exocyst complex component"/>
    <property type="match status" value="1"/>
</dbReference>
<dbReference type="FunFam" id="1.20.58.670:FF:000002">
    <property type="entry name" value="Exocyst complex component"/>
    <property type="match status" value="1"/>
</dbReference>
<dbReference type="Gene3D" id="1.20.58.670">
    <property type="entry name" value="Dsl1p vesicle tethering complex, Tip20p subunit, domain D"/>
    <property type="match status" value="1"/>
</dbReference>
<dbReference type="Gene3D" id="1.10.357.30">
    <property type="entry name" value="Exocyst complex subunit Sec15 C-terminal domain, N-terminal subdomain"/>
    <property type="match status" value="1"/>
</dbReference>
<dbReference type="InterPro" id="IPR007225">
    <property type="entry name" value="EXOC6/Sec15"/>
</dbReference>
<dbReference type="InterPro" id="IPR046361">
    <property type="entry name" value="EXOC6/Sec15_C"/>
</dbReference>
<dbReference type="InterPro" id="IPR042045">
    <property type="entry name" value="EXOC6/Sec15_C_dom1"/>
</dbReference>
<dbReference type="InterPro" id="IPR048359">
    <property type="entry name" value="EXOC6_Sec15_N"/>
</dbReference>
<dbReference type="InterPro" id="IPR042044">
    <property type="entry name" value="EXOC6PINT-1/Sec15/Tip20_C_dom2"/>
</dbReference>
<dbReference type="PANTHER" id="PTHR12702:SF0">
    <property type="entry name" value="EXOCYST COMPLEX COMPONENT 6"/>
    <property type="match status" value="1"/>
</dbReference>
<dbReference type="PANTHER" id="PTHR12702">
    <property type="entry name" value="SEC15"/>
    <property type="match status" value="1"/>
</dbReference>
<dbReference type="Pfam" id="PF20651">
    <property type="entry name" value="EXOC6_Sec15_N"/>
    <property type="match status" value="1"/>
</dbReference>
<dbReference type="Pfam" id="PF04091">
    <property type="entry name" value="Sec15_C"/>
    <property type="match status" value="1"/>
</dbReference>
<dbReference type="PIRSF" id="PIRSF025007">
    <property type="entry name" value="Sec15"/>
    <property type="match status" value="1"/>
</dbReference>
<feature type="chain" id="PRO_0000118957" description="Exocyst complex component SEC15A">
    <location>
        <begin position="1"/>
        <end position="790"/>
    </location>
</feature>
<feature type="coiled-coil region" evidence="1">
    <location>
        <begin position="49"/>
        <end position="70"/>
    </location>
</feature>
<organism>
    <name type="scientific">Arabidopsis thaliana</name>
    <name type="common">Mouse-ear cress</name>
    <dbReference type="NCBI Taxonomy" id="3702"/>
    <lineage>
        <taxon>Eukaryota</taxon>
        <taxon>Viridiplantae</taxon>
        <taxon>Streptophyta</taxon>
        <taxon>Embryophyta</taxon>
        <taxon>Tracheophyta</taxon>
        <taxon>Spermatophyta</taxon>
        <taxon>Magnoliopsida</taxon>
        <taxon>eudicotyledons</taxon>
        <taxon>Gunneridae</taxon>
        <taxon>Pentapetalae</taxon>
        <taxon>rosids</taxon>
        <taxon>malvids</taxon>
        <taxon>Brassicales</taxon>
        <taxon>Brassicaceae</taxon>
        <taxon>Camelineae</taxon>
        <taxon>Arabidopsis</taxon>
    </lineage>
</organism>
<protein>
    <recommendedName>
        <fullName>Exocyst complex component SEC15A</fullName>
        <shortName>AtSec15a</shortName>
    </recommendedName>
    <alternativeName>
        <fullName>Probable exocyst complex component 6</fullName>
    </alternativeName>
</protein>
<sequence length="790" mass="90000">MMEAKPKRRIVTENGDTGEDLVLATLIGNGDDVGPLVRHAFEMGRPEPLVHQLKNVARKKEAEIEDLCKTHYEEFIVAVDELRGVLVDAEELKSDLASDNFRLQEVGSALLVKLEELLESYAVKKNVTEAIKMSKICVQALELCVKCNSYISEGQFYHALKTMDLIEKSYLKLIPLKVLKLVIERRIPVIKTHIEKKVCSQFNEWLVHIRSSSKNIGQTAIGLTASARQREEEMLERQRRAEEQNTGGLGELAYTLDVEDSEQDSVLKFDLTPLYRAYHIHTILGVPERFRDYYYENRLLQLQSDLQITYTQPFVESYQTFLAQVAGYFIVEDRVIRTAGDFLLADQVETMWETAISKIVAILENQFARMDSPTHLLLVKDYVTLLGTTLRQYGYEVGPVLDALDKSRDKYHELLLEECRKQIVTAITEDTYQQMVIKKEADYENNVLSFNLQTSDIMPAFTYIAPFSSMVPDVCRIIRSYIKGSVDYLSYGVNTNFFSVLRKYLDKILIDVLNEVILETISNNSIGVSQAMQIAANISFLEKASDYFLRHAAQLCGIPSRSVERPQASLAAKVVLKTSRDAAYLALLNVVNTKLDEFMKLTENVNWTTEEMPQGPHEYINEVVIYLETVMSTAQQILPMDALYKVGVGAIEHISNSIVSTFLSDSIKRFNANAVSAINHDLRVIENFADERYHSSGLNEIYKEGSFRSYLVEARQLINLLSSSQPENFMNPVIRERNYNTLDYKKVATICEKFKDSADGIFGSLANRNTKLTAKKKSMDMLKKRLKEFN</sequence>
<keyword id="KW-0175">Coiled coil</keyword>
<keyword id="KW-0963">Cytoplasm</keyword>
<keyword id="KW-0268">Exocytosis</keyword>
<keyword id="KW-1185">Reference proteome</keyword>
<keyword id="KW-0813">Transport</keyword>
<reference key="1">
    <citation type="journal article" date="2000" name="Nature">
        <title>Sequence and analysis of chromosome 3 of the plant Arabidopsis thaliana.</title>
        <authorList>
            <person name="Salanoubat M."/>
            <person name="Lemcke K."/>
            <person name="Rieger M."/>
            <person name="Ansorge W."/>
            <person name="Unseld M."/>
            <person name="Fartmann B."/>
            <person name="Valle G."/>
            <person name="Bloecker H."/>
            <person name="Perez-Alonso M."/>
            <person name="Obermaier B."/>
            <person name="Delseny M."/>
            <person name="Boutry M."/>
            <person name="Grivell L.A."/>
            <person name="Mache R."/>
            <person name="Puigdomenech P."/>
            <person name="De Simone V."/>
            <person name="Choisne N."/>
            <person name="Artiguenave F."/>
            <person name="Robert C."/>
            <person name="Brottier P."/>
            <person name="Wincker P."/>
            <person name="Cattolico L."/>
            <person name="Weissenbach J."/>
            <person name="Saurin W."/>
            <person name="Quetier F."/>
            <person name="Schaefer M."/>
            <person name="Mueller-Auer S."/>
            <person name="Gabel C."/>
            <person name="Fuchs M."/>
            <person name="Benes V."/>
            <person name="Wurmbach E."/>
            <person name="Drzonek H."/>
            <person name="Erfle H."/>
            <person name="Jordan N."/>
            <person name="Bangert S."/>
            <person name="Wiedelmann R."/>
            <person name="Kranz H."/>
            <person name="Voss H."/>
            <person name="Holland R."/>
            <person name="Brandt P."/>
            <person name="Nyakatura G."/>
            <person name="Vezzi A."/>
            <person name="D'Angelo M."/>
            <person name="Pallavicini A."/>
            <person name="Toppo S."/>
            <person name="Simionati B."/>
            <person name="Conrad A."/>
            <person name="Hornischer K."/>
            <person name="Kauer G."/>
            <person name="Loehnert T.-H."/>
            <person name="Nordsiek G."/>
            <person name="Reichelt J."/>
            <person name="Scharfe M."/>
            <person name="Schoen O."/>
            <person name="Bargues M."/>
            <person name="Terol J."/>
            <person name="Climent J."/>
            <person name="Navarro P."/>
            <person name="Collado C."/>
            <person name="Perez-Perez A."/>
            <person name="Ottenwaelder B."/>
            <person name="Duchemin D."/>
            <person name="Cooke R."/>
            <person name="Laudie M."/>
            <person name="Berger-Llauro C."/>
            <person name="Purnelle B."/>
            <person name="Masuy D."/>
            <person name="de Haan M."/>
            <person name="Maarse A.C."/>
            <person name="Alcaraz J.-P."/>
            <person name="Cottet A."/>
            <person name="Casacuberta E."/>
            <person name="Monfort A."/>
            <person name="Argiriou A."/>
            <person name="Flores M."/>
            <person name="Liguori R."/>
            <person name="Vitale D."/>
            <person name="Mannhaupt G."/>
            <person name="Haase D."/>
            <person name="Schoof H."/>
            <person name="Rudd S."/>
            <person name="Zaccaria P."/>
            <person name="Mewes H.-W."/>
            <person name="Mayer K.F.X."/>
            <person name="Kaul S."/>
            <person name="Town C.D."/>
            <person name="Koo H.L."/>
            <person name="Tallon L.J."/>
            <person name="Jenkins J."/>
            <person name="Rooney T."/>
            <person name="Rizzo M."/>
            <person name="Walts A."/>
            <person name="Utterback T."/>
            <person name="Fujii C.Y."/>
            <person name="Shea T.P."/>
            <person name="Creasy T.H."/>
            <person name="Haas B."/>
            <person name="Maiti R."/>
            <person name="Wu D."/>
            <person name="Peterson J."/>
            <person name="Van Aken S."/>
            <person name="Pai G."/>
            <person name="Militscher J."/>
            <person name="Sellers P."/>
            <person name="Gill J.E."/>
            <person name="Feldblyum T.V."/>
            <person name="Preuss D."/>
            <person name="Lin X."/>
            <person name="Nierman W.C."/>
            <person name="Salzberg S.L."/>
            <person name="White O."/>
            <person name="Venter J.C."/>
            <person name="Fraser C.M."/>
            <person name="Kaneko T."/>
            <person name="Nakamura Y."/>
            <person name="Sato S."/>
            <person name="Kato T."/>
            <person name="Asamizu E."/>
            <person name="Sasamoto S."/>
            <person name="Kimura T."/>
            <person name="Idesawa K."/>
            <person name="Kawashima K."/>
            <person name="Kishida Y."/>
            <person name="Kiyokawa C."/>
            <person name="Kohara M."/>
            <person name="Matsumoto M."/>
            <person name="Matsuno A."/>
            <person name="Muraki A."/>
            <person name="Nakayama S."/>
            <person name="Nakazaki N."/>
            <person name="Shinpo S."/>
            <person name="Takeuchi C."/>
            <person name="Wada T."/>
            <person name="Watanabe A."/>
            <person name="Yamada M."/>
            <person name="Yasuda M."/>
            <person name="Tabata S."/>
        </authorList>
    </citation>
    <scope>NUCLEOTIDE SEQUENCE [LARGE SCALE GENOMIC DNA]</scope>
    <source>
        <strain>cv. Columbia</strain>
    </source>
</reference>
<reference key="2">
    <citation type="journal article" date="2017" name="Plant J.">
        <title>Araport11: a complete reannotation of the Arabidopsis thaliana reference genome.</title>
        <authorList>
            <person name="Cheng C.Y."/>
            <person name="Krishnakumar V."/>
            <person name="Chan A.P."/>
            <person name="Thibaud-Nissen F."/>
            <person name="Schobel S."/>
            <person name="Town C.D."/>
        </authorList>
    </citation>
    <scope>GENOME REANNOTATION</scope>
    <source>
        <strain>cv. Columbia</strain>
    </source>
</reference>
<reference key="3">
    <citation type="journal article" date="2008" name="Plant Cell">
        <title>An exocyst complex functions in plant cell growth in Arabidopsis and tobacco.</title>
        <authorList>
            <person name="Hala M."/>
            <person name="Cole R."/>
            <person name="Synek L."/>
            <person name="Drdova E."/>
            <person name="Pecenkova T."/>
            <person name="Nordheim A."/>
            <person name="Lamkemeyer T."/>
            <person name="Madlung J."/>
            <person name="Hochholdinger F."/>
            <person name="Fowler J.E."/>
            <person name="Zarsky V."/>
        </authorList>
    </citation>
    <scope>COMPONENT OF THE EXOCYST COMPLEX</scope>
    <scope>DISRUPTION PHENOTYPE</scope>
</reference>
<reference key="4">
    <citation type="journal article" date="2010" name="New Phytol.">
        <title>Characterization of the Arabidopsis thaliana exocyst complex gene families by phylogenetic, expression profiling, and subcellular localization studies.</title>
        <authorList>
            <person name="Chong Y.T."/>
            <person name="Gidda S.K."/>
            <person name="Sanford C."/>
            <person name="Parkinson J."/>
            <person name="Mullen R.T."/>
            <person name="Goring D.R."/>
        </authorList>
    </citation>
    <scope>GENE FAMILY</scope>
    <scope>NOMENCLATURE</scope>
    <scope>SUBCELLULAR LOCATION</scope>
</reference>
<name>SC15A_ARATH</name>
<gene>
    <name type="primary">SEC15A</name>
    <name type="ordered locus">At3g56640</name>
    <name type="ORF">T5P19.290</name>
</gene>
<evidence type="ECO:0000255" key="1"/>
<evidence type="ECO:0000269" key="2">
    <source>
    </source>
</evidence>
<evidence type="ECO:0000269" key="3">
    <source>
    </source>
</evidence>
<evidence type="ECO:0000305" key="4"/>